<keyword id="KW-1185">Reference proteome</keyword>
<keyword id="KW-0687">Ribonucleoprotein</keyword>
<keyword id="KW-0689">Ribosomal protein</keyword>
<keyword id="KW-0694">RNA-binding</keyword>
<keyword id="KW-0699">rRNA-binding</keyword>
<evidence type="ECO:0000255" key="1">
    <source>
        <dbReference type="HAMAP-Rule" id="MF_00736"/>
    </source>
</evidence>
<evidence type="ECO:0000305" key="2"/>
<feature type="chain" id="PRO_0000104439" description="Large ribosomal subunit protein uL11">
    <location>
        <begin position="1"/>
        <end position="160"/>
    </location>
</feature>
<comment type="function">
    <text evidence="1">Forms part of the ribosomal stalk which helps the ribosome interact with GTP-bound translation factors.</text>
</comment>
<comment type="subunit">
    <text evidence="1">Part of the ribosomal stalk of the 50S ribosomal subunit. Interacts with L10 and the large rRNA to form the base of the stalk. L10 forms an elongated spine to which L12 dimers bind in a sequential fashion forming a multimeric L10(L12)X complex.</text>
</comment>
<comment type="similarity">
    <text evidence="1">Belongs to the universal ribosomal protein uL11 family.</text>
</comment>
<accession>O27715</accession>
<gene>
    <name evidence="1" type="primary">rpl11</name>
    <name type="ordered locus">MTH_1679</name>
</gene>
<dbReference type="EMBL" id="AE000666">
    <property type="protein sequence ID" value="AAB86151.1"/>
    <property type="molecule type" value="Genomic_DNA"/>
</dbReference>
<dbReference type="PIR" id="D69091">
    <property type="entry name" value="D69091"/>
</dbReference>
<dbReference type="RefSeq" id="WP_010877286.1">
    <property type="nucleotide sequence ID" value="NC_000916.1"/>
</dbReference>
<dbReference type="SMR" id="O27715"/>
<dbReference type="FunCoup" id="O27715">
    <property type="interactions" value="160"/>
</dbReference>
<dbReference type="STRING" id="187420.MTH_1679"/>
<dbReference type="PaxDb" id="187420-MTH_1679"/>
<dbReference type="EnsemblBacteria" id="AAB86151">
    <property type="protein sequence ID" value="AAB86151"/>
    <property type="gene ID" value="MTH_1679"/>
</dbReference>
<dbReference type="KEGG" id="mth:MTH_1679"/>
<dbReference type="PATRIC" id="fig|187420.15.peg.1639"/>
<dbReference type="HOGENOM" id="CLU_074237_4_0_2"/>
<dbReference type="InParanoid" id="O27715"/>
<dbReference type="Proteomes" id="UP000005223">
    <property type="component" value="Chromosome"/>
</dbReference>
<dbReference type="GO" id="GO:0015934">
    <property type="term" value="C:large ribosomal subunit"/>
    <property type="evidence" value="ECO:0007669"/>
    <property type="project" value="TreeGrafter"/>
</dbReference>
<dbReference type="GO" id="GO:0070180">
    <property type="term" value="F:large ribosomal subunit rRNA binding"/>
    <property type="evidence" value="ECO:0007669"/>
    <property type="project" value="UniProtKB-UniRule"/>
</dbReference>
<dbReference type="GO" id="GO:0003735">
    <property type="term" value="F:structural constituent of ribosome"/>
    <property type="evidence" value="ECO:0007669"/>
    <property type="project" value="InterPro"/>
</dbReference>
<dbReference type="GO" id="GO:0006412">
    <property type="term" value="P:translation"/>
    <property type="evidence" value="ECO:0007669"/>
    <property type="project" value="UniProtKB-UniRule"/>
</dbReference>
<dbReference type="CDD" id="cd00349">
    <property type="entry name" value="Ribosomal_L11"/>
    <property type="match status" value="1"/>
</dbReference>
<dbReference type="FunFam" id="1.10.10.250:FF:000006">
    <property type="entry name" value="50S ribosomal protein L11"/>
    <property type="match status" value="1"/>
</dbReference>
<dbReference type="FunFam" id="3.30.1550.10:FF:000007">
    <property type="entry name" value="50S ribosomal protein L11"/>
    <property type="match status" value="1"/>
</dbReference>
<dbReference type="Gene3D" id="1.10.10.250">
    <property type="entry name" value="Ribosomal protein L11, C-terminal domain"/>
    <property type="match status" value="1"/>
</dbReference>
<dbReference type="Gene3D" id="3.30.1550.10">
    <property type="entry name" value="Ribosomal protein L11/L12, N-terminal domain"/>
    <property type="match status" value="1"/>
</dbReference>
<dbReference type="HAMAP" id="MF_00736">
    <property type="entry name" value="Ribosomal_uL11"/>
    <property type="match status" value="1"/>
</dbReference>
<dbReference type="InterPro" id="IPR000911">
    <property type="entry name" value="Ribosomal_uL11"/>
</dbReference>
<dbReference type="InterPro" id="IPR020783">
    <property type="entry name" value="Ribosomal_uL11_C"/>
</dbReference>
<dbReference type="InterPro" id="IPR036769">
    <property type="entry name" value="Ribosomal_uL11_C_sf"/>
</dbReference>
<dbReference type="InterPro" id="IPR020785">
    <property type="entry name" value="Ribosomal_uL11_CS"/>
</dbReference>
<dbReference type="InterPro" id="IPR020784">
    <property type="entry name" value="Ribosomal_uL11_N"/>
</dbReference>
<dbReference type="InterPro" id="IPR036796">
    <property type="entry name" value="Ribosomal_uL11_N_sf"/>
</dbReference>
<dbReference type="NCBIfam" id="NF002232">
    <property type="entry name" value="PRK01143.1"/>
    <property type="match status" value="1"/>
</dbReference>
<dbReference type="PANTHER" id="PTHR11661">
    <property type="entry name" value="60S RIBOSOMAL PROTEIN L12"/>
    <property type="match status" value="1"/>
</dbReference>
<dbReference type="PANTHER" id="PTHR11661:SF1">
    <property type="entry name" value="LARGE RIBOSOMAL SUBUNIT PROTEIN UL11M"/>
    <property type="match status" value="1"/>
</dbReference>
<dbReference type="Pfam" id="PF00298">
    <property type="entry name" value="Ribosomal_L11"/>
    <property type="match status" value="1"/>
</dbReference>
<dbReference type="Pfam" id="PF03946">
    <property type="entry name" value="Ribosomal_L11_N"/>
    <property type="match status" value="1"/>
</dbReference>
<dbReference type="SMART" id="SM00649">
    <property type="entry name" value="RL11"/>
    <property type="match status" value="1"/>
</dbReference>
<dbReference type="SUPFAM" id="SSF54747">
    <property type="entry name" value="Ribosomal L11/L12e N-terminal domain"/>
    <property type="match status" value="1"/>
</dbReference>
<dbReference type="SUPFAM" id="SSF46906">
    <property type="entry name" value="Ribosomal protein L11, C-terminal domain"/>
    <property type="match status" value="1"/>
</dbReference>
<dbReference type="PROSITE" id="PS00359">
    <property type="entry name" value="RIBOSOMAL_L11"/>
    <property type="match status" value="1"/>
</dbReference>
<proteinExistence type="inferred from homology"/>
<sequence>MAKETVEILIDGGKATPGPPLGPAIGPLGINMMQVVEEINRKTADFEGMKVPVKIIVDTDTRDFEVEVGTPPTTALIMDELKLEKGSQDPGMDKIADISMEQVLKIARMKFDALLSNDYKRAVKEIMGTCVSMGITVNGKDPREVQREVDQGVYDDLLTS</sequence>
<organism>
    <name type="scientific">Methanothermobacter thermautotrophicus (strain ATCC 29096 / DSM 1053 / JCM 10044 / NBRC 100330 / Delta H)</name>
    <name type="common">Methanobacterium thermoautotrophicum</name>
    <dbReference type="NCBI Taxonomy" id="187420"/>
    <lineage>
        <taxon>Archaea</taxon>
        <taxon>Methanobacteriati</taxon>
        <taxon>Methanobacteriota</taxon>
        <taxon>Methanomada group</taxon>
        <taxon>Methanobacteria</taxon>
        <taxon>Methanobacteriales</taxon>
        <taxon>Methanobacteriaceae</taxon>
        <taxon>Methanothermobacter</taxon>
    </lineage>
</organism>
<name>RL11_METTH</name>
<protein>
    <recommendedName>
        <fullName evidence="1">Large ribosomal subunit protein uL11</fullName>
    </recommendedName>
    <alternativeName>
        <fullName evidence="2">50S ribosomal protein L11</fullName>
    </alternativeName>
</protein>
<reference key="1">
    <citation type="journal article" date="1997" name="J. Bacteriol.">
        <title>Complete genome sequence of Methanobacterium thermoautotrophicum deltaH: functional analysis and comparative genomics.</title>
        <authorList>
            <person name="Smith D.R."/>
            <person name="Doucette-Stamm L.A."/>
            <person name="Deloughery C."/>
            <person name="Lee H.-M."/>
            <person name="Dubois J."/>
            <person name="Aldredge T."/>
            <person name="Bashirzadeh R."/>
            <person name="Blakely D."/>
            <person name="Cook R."/>
            <person name="Gilbert K."/>
            <person name="Harrison D."/>
            <person name="Hoang L."/>
            <person name="Keagle P."/>
            <person name="Lumm W."/>
            <person name="Pothier B."/>
            <person name="Qiu D."/>
            <person name="Spadafora R."/>
            <person name="Vicare R."/>
            <person name="Wang Y."/>
            <person name="Wierzbowski J."/>
            <person name="Gibson R."/>
            <person name="Jiwani N."/>
            <person name="Caruso A."/>
            <person name="Bush D."/>
            <person name="Safer H."/>
            <person name="Patwell D."/>
            <person name="Prabhakar S."/>
            <person name="McDougall S."/>
            <person name="Shimer G."/>
            <person name="Goyal A."/>
            <person name="Pietrovski S."/>
            <person name="Church G.M."/>
            <person name="Daniels C.J."/>
            <person name="Mao J.-I."/>
            <person name="Rice P."/>
            <person name="Noelling J."/>
            <person name="Reeve J.N."/>
        </authorList>
    </citation>
    <scope>NUCLEOTIDE SEQUENCE [LARGE SCALE GENOMIC DNA]</scope>
    <source>
        <strain>ATCC 29096 / DSM 1053 / JCM 10044 / NBRC 100330 / Delta H</strain>
    </source>
</reference>